<name>METR_BUCAP</name>
<comment type="function">
    <text evidence="1">Control of the last step in methionine biosynthesis; MetR is a positive activator of the metA, metE and metH genes.</text>
</comment>
<comment type="subcellular location">
    <subcellularLocation>
        <location evidence="1">Cytoplasm</location>
    </subcellularLocation>
</comment>
<comment type="similarity">
    <text evidence="3">Belongs to the LysR transcriptional regulatory family.</text>
</comment>
<protein>
    <recommendedName>
        <fullName>HTH-type transcriptional regulator MetR</fullName>
    </recommendedName>
</protein>
<accession>Q8KA72</accession>
<reference key="1">
    <citation type="journal article" date="2002" name="Science">
        <title>50 million years of genomic stasis in endosymbiotic bacteria.</title>
        <authorList>
            <person name="Tamas I."/>
            <person name="Klasson L."/>
            <person name="Canbaeck B."/>
            <person name="Naeslund A.K."/>
            <person name="Eriksson A.-S."/>
            <person name="Wernegreen J.J."/>
            <person name="Sandstroem J.P."/>
            <person name="Moran N.A."/>
            <person name="Andersson S.G.E."/>
        </authorList>
    </citation>
    <scope>NUCLEOTIDE SEQUENCE [LARGE SCALE GENOMIC DNA]</scope>
    <source>
        <strain>Sg</strain>
    </source>
</reference>
<feature type="chain" id="PRO_0000105678" description="HTH-type transcriptional regulator MetR">
    <location>
        <begin position="1"/>
        <end position="312"/>
    </location>
</feature>
<feature type="domain" description="HTH lysR-type" evidence="2">
    <location>
        <begin position="1"/>
        <end position="59"/>
    </location>
</feature>
<feature type="DNA-binding region" description="H-T-H motif" evidence="2">
    <location>
        <begin position="19"/>
        <end position="38"/>
    </location>
</feature>
<gene>
    <name type="primary">metR</name>
    <name type="ordered locus">BUsg_030</name>
</gene>
<evidence type="ECO:0000250" key="1"/>
<evidence type="ECO:0000255" key="2">
    <source>
        <dbReference type="PROSITE-ProRule" id="PRU00253"/>
    </source>
</evidence>
<evidence type="ECO:0000305" key="3"/>
<sequence length="312" mass="36186">MIEIKHLRTLQALKNNGSLSAAAIQLHQTQSAISHQFNELEKKLGFKLFIRKSNPIKFTAQGEILLQLSKEILPKIHKAIQNCKKTHQMIIKLAIECHSCIQWLTPALKIFQKKWPRVEIDFYSDMIFSPQPSLQQGKLDIVLTSEVLPRSNLFYFPIFDFEVRLVLSPNHPLAQKKHNILPEDLISEILMIYPVKRDKLDIWKFFLQPAGIIPIFKNVNNTLLLIQMVAAKMGITALPHWVVDTFEKQGLVVTKKLGDGIWKRLYAAIRDGDQKELIIKNFIYAIRLHVCTHLKFIRDTQKPHFFKNVKNI</sequence>
<keyword id="KW-0010">Activator</keyword>
<keyword id="KW-0028">Amino-acid biosynthesis</keyword>
<keyword id="KW-0963">Cytoplasm</keyword>
<keyword id="KW-0238">DNA-binding</keyword>
<keyword id="KW-0486">Methionine biosynthesis</keyword>
<keyword id="KW-0678">Repressor</keyword>
<keyword id="KW-0804">Transcription</keyword>
<keyword id="KW-0805">Transcription regulation</keyword>
<dbReference type="EMBL" id="AE013218">
    <property type="protein sequence ID" value="AAM67601.1"/>
    <property type="molecule type" value="Genomic_DNA"/>
</dbReference>
<dbReference type="RefSeq" id="WP_011053567.1">
    <property type="nucleotide sequence ID" value="NC_004061.1"/>
</dbReference>
<dbReference type="SMR" id="Q8KA72"/>
<dbReference type="STRING" id="198804.BUsg_030"/>
<dbReference type="GeneID" id="93003493"/>
<dbReference type="KEGG" id="bas:BUsg_030"/>
<dbReference type="eggNOG" id="COG0583">
    <property type="taxonomic scope" value="Bacteria"/>
</dbReference>
<dbReference type="HOGENOM" id="CLU_039613_6_0_6"/>
<dbReference type="Proteomes" id="UP000000416">
    <property type="component" value="Chromosome"/>
</dbReference>
<dbReference type="GO" id="GO:0005737">
    <property type="term" value="C:cytoplasm"/>
    <property type="evidence" value="ECO:0007669"/>
    <property type="project" value="UniProtKB-SubCell"/>
</dbReference>
<dbReference type="GO" id="GO:0003700">
    <property type="term" value="F:DNA-binding transcription factor activity"/>
    <property type="evidence" value="ECO:0007669"/>
    <property type="project" value="InterPro"/>
</dbReference>
<dbReference type="GO" id="GO:0000976">
    <property type="term" value="F:transcription cis-regulatory region binding"/>
    <property type="evidence" value="ECO:0007669"/>
    <property type="project" value="TreeGrafter"/>
</dbReference>
<dbReference type="GO" id="GO:0009086">
    <property type="term" value="P:methionine biosynthetic process"/>
    <property type="evidence" value="ECO:0007669"/>
    <property type="project" value="UniProtKB-KW"/>
</dbReference>
<dbReference type="CDD" id="cd08441">
    <property type="entry name" value="PBP2_MetR"/>
    <property type="match status" value="1"/>
</dbReference>
<dbReference type="FunFam" id="1.10.10.10:FF:000247">
    <property type="entry name" value="HTH-type transcriptional regulator MetR"/>
    <property type="match status" value="1"/>
</dbReference>
<dbReference type="Gene3D" id="3.40.190.10">
    <property type="entry name" value="Periplasmic binding protein-like II"/>
    <property type="match status" value="2"/>
</dbReference>
<dbReference type="Gene3D" id="1.10.10.10">
    <property type="entry name" value="Winged helix-like DNA-binding domain superfamily/Winged helix DNA-binding domain"/>
    <property type="match status" value="1"/>
</dbReference>
<dbReference type="InterPro" id="IPR005119">
    <property type="entry name" value="LysR_subst-bd"/>
</dbReference>
<dbReference type="InterPro" id="IPR037406">
    <property type="entry name" value="MetR_PBP2"/>
</dbReference>
<dbReference type="InterPro" id="IPR000847">
    <property type="entry name" value="Tscrpt_reg_HTH_LysR"/>
</dbReference>
<dbReference type="InterPro" id="IPR036388">
    <property type="entry name" value="WH-like_DNA-bd_sf"/>
</dbReference>
<dbReference type="InterPro" id="IPR036390">
    <property type="entry name" value="WH_DNA-bd_sf"/>
</dbReference>
<dbReference type="NCBIfam" id="NF011950">
    <property type="entry name" value="PRK15421.1"/>
    <property type="match status" value="1"/>
</dbReference>
<dbReference type="PANTHER" id="PTHR30126">
    <property type="entry name" value="HTH-TYPE TRANSCRIPTIONAL REGULATOR"/>
    <property type="match status" value="1"/>
</dbReference>
<dbReference type="PANTHER" id="PTHR30126:SF25">
    <property type="entry name" value="HTH-TYPE TRANSCRIPTIONAL REGULATOR METR"/>
    <property type="match status" value="1"/>
</dbReference>
<dbReference type="Pfam" id="PF00126">
    <property type="entry name" value="HTH_1"/>
    <property type="match status" value="1"/>
</dbReference>
<dbReference type="Pfam" id="PF03466">
    <property type="entry name" value="LysR_substrate"/>
    <property type="match status" value="1"/>
</dbReference>
<dbReference type="PRINTS" id="PR00039">
    <property type="entry name" value="HTHLYSR"/>
</dbReference>
<dbReference type="SUPFAM" id="SSF53850">
    <property type="entry name" value="Periplasmic binding protein-like II"/>
    <property type="match status" value="1"/>
</dbReference>
<dbReference type="SUPFAM" id="SSF46785">
    <property type="entry name" value="Winged helix' DNA-binding domain"/>
    <property type="match status" value="1"/>
</dbReference>
<dbReference type="PROSITE" id="PS50931">
    <property type="entry name" value="HTH_LYSR"/>
    <property type="match status" value="1"/>
</dbReference>
<organism>
    <name type="scientific">Buchnera aphidicola subsp. Schizaphis graminum (strain Sg)</name>
    <dbReference type="NCBI Taxonomy" id="198804"/>
    <lineage>
        <taxon>Bacteria</taxon>
        <taxon>Pseudomonadati</taxon>
        <taxon>Pseudomonadota</taxon>
        <taxon>Gammaproteobacteria</taxon>
        <taxon>Enterobacterales</taxon>
        <taxon>Erwiniaceae</taxon>
        <taxon>Buchnera</taxon>
    </lineage>
</organism>
<proteinExistence type="inferred from homology"/>